<protein>
    <recommendedName>
        <fullName evidence="1">Cysteine desulfurase</fullName>
        <ecNumber evidence="1">2.8.1.7</ecNumber>
    </recommendedName>
    <alternativeName>
        <fullName evidence="1">Selenocysteine beta-lyase</fullName>
        <shortName evidence="1">SCL</shortName>
    </alternativeName>
    <alternativeName>
        <fullName evidence="1">Selenocysteine lyase</fullName>
        <ecNumber evidence="1">4.4.1.16</ecNumber>
    </alternativeName>
    <alternativeName>
        <fullName evidence="1">Selenocysteine reductase</fullName>
    </alternativeName>
</protein>
<proteinExistence type="inferred from homology"/>
<comment type="function">
    <text evidence="1">Cysteine desulfurases mobilize the sulfur from L-cysteine to yield L-alanine, an essential step in sulfur metabolism for biosynthesis of a variety of sulfur-containing biomolecules. Component of the suf operon, which is activated and required under specific conditions such as oxidative stress and iron limitation. Acts as a potent selenocysteine lyase in vitro, that mobilizes selenium from L-selenocysteine. Selenocysteine lyase activity is however unsure in vivo.</text>
</comment>
<comment type="catalytic activity">
    <reaction evidence="1">
        <text>(sulfur carrier)-H + L-cysteine = (sulfur carrier)-SH + L-alanine</text>
        <dbReference type="Rhea" id="RHEA:43892"/>
        <dbReference type="Rhea" id="RHEA-COMP:14737"/>
        <dbReference type="Rhea" id="RHEA-COMP:14739"/>
        <dbReference type="ChEBI" id="CHEBI:29917"/>
        <dbReference type="ChEBI" id="CHEBI:35235"/>
        <dbReference type="ChEBI" id="CHEBI:57972"/>
        <dbReference type="ChEBI" id="CHEBI:64428"/>
        <dbReference type="EC" id="2.8.1.7"/>
    </reaction>
</comment>
<comment type="catalytic activity">
    <reaction evidence="1">
        <text>L-selenocysteine + AH2 = hydrogenselenide + L-alanine + A + H(+)</text>
        <dbReference type="Rhea" id="RHEA:11632"/>
        <dbReference type="ChEBI" id="CHEBI:13193"/>
        <dbReference type="ChEBI" id="CHEBI:15378"/>
        <dbReference type="ChEBI" id="CHEBI:17499"/>
        <dbReference type="ChEBI" id="CHEBI:29317"/>
        <dbReference type="ChEBI" id="CHEBI:57843"/>
        <dbReference type="ChEBI" id="CHEBI:57972"/>
        <dbReference type="EC" id="4.4.1.16"/>
    </reaction>
</comment>
<comment type="cofactor">
    <cofactor evidence="1">
        <name>pyridoxal 5'-phosphate</name>
        <dbReference type="ChEBI" id="CHEBI:597326"/>
    </cofactor>
</comment>
<comment type="pathway">
    <text evidence="1">Cofactor biosynthesis; iron-sulfur cluster biosynthesis.</text>
</comment>
<comment type="subunit">
    <text evidence="1">Homodimer. Interacts with SufE and the SufBCD complex composed of SufB, SufC and SufD. The interaction with SufE is required to mediate the direct transfer of the sulfur atom from the S-sulfanylcysteine.</text>
</comment>
<comment type="subcellular location">
    <subcellularLocation>
        <location evidence="1">Cytoplasm</location>
    </subcellularLocation>
</comment>
<comment type="similarity">
    <text evidence="1">Belongs to the class-V pyridoxal-phosphate-dependent aminotransferase family. Csd subfamily.</text>
</comment>
<name>SUFS_SALTY</name>
<reference key="1">
    <citation type="journal article" date="2001" name="Nature">
        <title>Complete genome sequence of Salmonella enterica serovar Typhimurium LT2.</title>
        <authorList>
            <person name="McClelland M."/>
            <person name="Sanderson K.E."/>
            <person name="Spieth J."/>
            <person name="Clifton S.W."/>
            <person name="Latreille P."/>
            <person name="Courtney L."/>
            <person name="Porwollik S."/>
            <person name="Ali J."/>
            <person name="Dante M."/>
            <person name="Du F."/>
            <person name="Hou S."/>
            <person name="Layman D."/>
            <person name="Leonard S."/>
            <person name="Nguyen C."/>
            <person name="Scott K."/>
            <person name="Holmes A."/>
            <person name="Grewal N."/>
            <person name="Mulvaney E."/>
            <person name="Ryan E."/>
            <person name="Sun H."/>
            <person name="Florea L."/>
            <person name="Miller W."/>
            <person name="Stoneking T."/>
            <person name="Nhan M."/>
            <person name="Waterston R."/>
            <person name="Wilson R.K."/>
        </authorList>
    </citation>
    <scope>NUCLEOTIDE SEQUENCE [LARGE SCALE GENOMIC DNA]</scope>
    <source>
        <strain>LT2 / SGSC1412 / ATCC 700720</strain>
    </source>
</reference>
<feature type="chain" id="PRO_0000150336" description="Cysteine desulfurase">
    <location>
        <begin position="1"/>
        <end position="406"/>
    </location>
</feature>
<feature type="active site" description="Cysteine persulfide intermediate" evidence="1">
    <location>
        <position position="364"/>
    </location>
</feature>
<feature type="modified residue" description="N6-(pyridoxal phosphate)lysine" evidence="1">
    <location>
        <position position="226"/>
    </location>
</feature>
<accession>Q7CQN5</accession>
<organism>
    <name type="scientific">Salmonella typhimurium (strain LT2 / SGSC1412 / ATCC 700720)</name>
    <dbReference type="NCBI Taxonomy" id="99287"/>
    <lineage>
        <taxon>Bacteria</taxon>
        <taxon>Pseudomonadati</taxon>
        <taxon>Pseudomonadota</taxon>
        <taxon>Gammaproteobacteria</taxon>
        <taxon>Enterobacterales</taxon>
        <taxon>Enterobacteriaceae</taxon>
        <taxon>Salmonella</taxon>
    </lineage>
</organism>
<sequence length="406" mass="44504">MTFPVEKVRADFPILQREVNGLPLAYLDSAASAQKPNQVIDAESAFYRHGYAAVHRGIHTLSAQATESMENVRKQASRFINARSAEELVFVRGTTEGINLVANSWGTENIRAGDNIIISEMEHHANIVPWQMLCERKGAELRVIPLHPDGTLRLETLAALFDDRTRLLAITHVSNVLGTENPLPDMIALARQHGAKVLVDGAQAVMHHAVDVQALDCDFYVFSGHKLYGPTGIGILYVKEALLQEMPPWEGGGSMISTVSLTQGTTWAKAPWRFEAGTPNTGGIIGLGAAIDYVTSLGLDKIGDYEQMLMRYALEQLAQVPDITLYGPAQRLGVIAFNLGKHHAYDVGSFLDNYGIAVRTGHHCAMPLMAWYGVPAMCRASLAMYNTHEEVDRLVAGLTRIHRLLG</sequence>
<evidence type="ECO:0000255" key="1">
    <source>
        <dbReference type="HAMAP-Rule" id="MF_01831"/>
    </source>
</evidence>
<dbReference type="EC" id="2.8.1.7" evidence="1"/>
<dbReference type="EC" id="4.4.1.16" evidence="1"/>
<dbReference type="EMBL" id="AE006468">
    <property type="protein sequence ID" value="AAL20297.1"/>
    <property type="molecule type" value="Genomic_DNA"/>
</dbReference>
<dbReference type="RefSeq" id="NP_460338.1">
    <property type="nucleotide sequence ID" value="NC_003197.2"/>
</dbReference>
<dbReference type="RefSeq" id="WP_000143859.1">
    <property type="nucleotide sequence ID" value="NC_003197.2"/>
</dbReference>
<dbReference type="SMR" id="Q7CQN5"/>
<dbReference type="STRING" id="99287.STM1373"/>
<dbReference type="PaxDb" id="99287-STM1373"/>
<dbReference type="GeneID" id="1252891"/>
<dbReference type="KEGG" id="stm:STM1373"/>
<dbReference type="PATRIC" id="fig|99287.12.peg.1456"/>
<dbReference type="HOGENOM" id="CLU_003433_2_5_6"/>
<dbReference type="OMA" id="LVTWQQI"/>
<dbReference type="PhylomeDB" id="Q7CQN5"/>
<dbReference type="BioCyc" id="SENT99287:STM1373-MONOMER"/>
<dbReference type="UniPathway" id="UPA00266"/>
<dbReference type="Proteomes" id="UP000001014">
    <property type="component" value="Chromosome"/>
</dbReference>
<dbReference type="GO" id="GO:0005737">
    <property type="term" value="C:cytoplasm"/>
    <property type="evidence" value="ECO:0007669"/>
    <property type="project" value="UniProtKB-SubCell"/>
</dbReference>
<dbReference type="GO" id="GO:0031071">
    <property type="term" value="F:cysteine desulfurase activity"/>
    <property type="evidence" value="ECO:0007669"/>
    <property type="project" value="UniProtKB-UniRule"/>
</dbReference>
<dbReference type="GO" id="GO:0030170">
    <property type="term" value="F:pyridoxal phosphate binding"/>
    <property type="evidence" value="ECO:0007669"/>
    <property type="project" value="InterPro"/>
</dbReference>
<dbReference type="GO" id="GO:0009000">
    <property type="term" value="F:selenocysteine lyase activity"/>
    <property type="evidence" value="ECO:0007669"/>
    <property type="project" value="UniProtKB-UniRule"/>
</dbReference>
<dbReference type="GO" id="GO:0006534">
    <property type="term" value="P:cysteine metabolic process"/>
    <property type="evidence" value="ECO:0007669"/>
    <property type="project" value="InterPro"/>
</dbReference>
<dbReference type="CDD" id="cd06453">
    <property type="entry name" value="SufS_like"/>
    <property type="match status" value="1"/>
</dbReference>
<dbReference type="FunFam" id="3.40.640.10:FF:000042">
    <property type="entry name" value="Cysteine desulfurase"/>
    <property type="match status" value="1"/>
</dbReference>
<dbReference type="Gene3D" id="3.90.1150.10">
    <property type="entry name" value="Aspartate Aminotransferase, domain 1"/>
    <property type="match status" value="1"/>
</dbReference>
<dbReference type="Gene3D" id="3.40.640.10">
    <property type="entry name" value="Type I PLP-dependent aspartate aminotransferase-like (Major domain)"/>
    <property type="match status" value="1"/>
</dbReference>
<dbReference type="HAMAP" id="MF_01831">
    <property type="entry name" value="SufS_aminotrans_5"/>
    <property type="match status" value="1"/>
</dbReference>
<dbReference type="InterPro" id="IPR000192">
    <property type="entry name" value="Aminotrans_V_dom"/>
</dbReference>
<dbReference type="InterPro" id="IPR020578">
    <property type="entry name" value="Aminotrans_V_PyrdxlP_BS"/>
</dbReference>
<dbReference type="InterPro" id="IPR010970">
    <property type="entry name" value="Cys_dSase_SufS"/>
</dbReference>
<dbReference type="InterPro" id="IPR015424">
    <property type="entry name" value="PyrdxlP-dep_Trfase"/>
</dbReference>
<dbReference type="InterPro" id="IPR015421">
    <property type="entry name" value="PyrdxlP-dep_Trfase_major"/>
</dbReference>
<dbReference type="InterPro" id="IPR015422">
    <property type="entry name" value="PyrdxlP-dep_Trfase_small"/>
</dbReference>
<dbReference type="NCBIfam" id="NF006791">
    <property type="entry name" value="PRK09295.1"/>
    <property type="match status" value="1"/>
</dbReference>
<dbReference type="NCBIfam" id="TIGR01979">
    <property type="entry name" value="sufS"/>
    <property type="match status" value="1"/>
</dbReference>
<dbReference type="PANTHER" id="PTHR43586">
    <property type="entry name" value="CYSTEINE DESULFURASE"/>
    <property type="match status" value="1"/>
</dbReference>
<dbReference type="PANTHER" id="PTHR43586:SF25">
    <property type="entry name" value="CYSTEINE DESULFURASE"/>
    <property type="match status" value="1"/>
</dbReference>
<dbReference type="Pfam" id="PF00266">
    <property type="entry name" value="Aminotran_5"/>
    <property type="match status" value="1"/>
</dbReference>
<dbReference type="SUPFAM" id="SSF53383">
    <property type="entry name" value="PLP-dependent transferases"/>
    <property type="match status" value="1"/>
</dbReference>
<dbReference type="PROSITE" id="PS00595">
    <property type="entry name" value="AA_TRANSFER_CLASS_5"/>
    <property type="match status" value="1"/>
</dbReference>
<gene>
    <name evidence="1" type="primary">sufS</name>
    <name type="ordered locus">STM1373</name>
</gene>
<keyword id="KW-0963">Cytoplasm</keyword>
<keyword id="KW-0456">Lyase</keyword>
<keyword id="KW-0663">Pyridoxal phosphate</keyword>
<keyword id="KW-1185">Reference proteome</keyword>
<keyword id="KW-0808">Transferase</keyword>